<comment type="function">
    <text evidence="3">Transcriptional activator. C/EBP are DNA-binding proteins that recognize two different motifs: the CCAAT homology common to many promoters and the enhanced core homology common to many enhancers. Required for the promyelocyte-myelocyte transition in myeloid differentiation.</text>
</comment>
<comment type="subunit">
    <text evidence="2 3">Binds DNA as a homodimer and as a heterodimer. Can form stable heterodimers with CEBPA, CEBPB and CEBPD (By similarity). Interacts with GATA1 and SPI1 (By similarity). Interacts with SMARCD2 (By similarity).</text>
</comment>
<comment type="subcellular location">
    <subcellularLocation>
        <location evidence="4">Nucleus</location>
    </subcellularLocation>
</comment>
<comment type="PTM">
    <text evidence="1">Phosphorylated.</text>
</comment>
<comment type="similarity">
    <text evidence="6">Belongs to the bZIP family. C/EBP subfamily.</text>
</comment>
<evidence type="ECO:0000250" key="1"/>
<evidence type="ECO:0000250" key="2">
    <source>
        <dbReference type="UniProtKB" id="P56261"/>
    </source>
</evidence>
<evidence type="ECO:0000250" key="3">
    <source>
        <dbReference type="UniProtKB" id="Q15744"/>
    </source>
</evidence>
<evidence type="ECO:0000255" key="4">
    <source>
        <dbReference type="PROSITE-ProRule" id="PRU00978"/>
    </source>
</evidence>
<evidence type="ECO:0000256" key="5">
    <source>
        <dbReference type="SAM" id="MobiDB-lite"/>
    </source>
</evidence>
<evidence type="ECO:0000305" key="6"/>
<evidence type="ECO:0007744" key="7">
    <source>
    </source>
</evidence>
<organism>
    <name type="scientific">Mus musculus</name>
    <name type="common">Mouse</name>
    <dbReference type="NCBI Taxonomy" id="10090"/>
    <lineage>
        <taxon>Eukaryota</taxon>
        <taxon>Metazoa</taxon>
        <taxon>Chordata</taxon>
        <taxon>Craniata</taxon>
        <taxon>Vertebrata</taxon>
        <taxon>Euteleostomi</taxon>
        <taxon>Mammalia</taxon>
        <taxon>Eutheria</taxon>
        <taxon>Euarchontoglires</taxon>
        <taxon>Glires</taxon>
        <taxon>Rodentia</taxon>
        <taxon>Myomorpha</taxon>
        <taxon>Muroidea</taxon>
        <taxon>Muridae</taxon>
        <taxon>Murinae</taxon>
        <taxon>Mus</taxon>
        <taxon>Mus</taxon>
    </lineage>
</organism>
<proteinExistence type="evidence at protein level"/>
<name>CEBPE_MOUSE</name>
<protein>
    <recommendedName>
        <fullName>CCAAT/enhancer-binding protein epsilon</fullName>
        <shortName>C/EBP epsilon</shortName>
    </recommendedName>
</protein>
<sequence>MSHGTYYECEPRGGQQPLEFSGGRAGPGELGDMCEHEASIDLSAYIESGEEQLLSDLFAMKPTPEARSLKGPGAPSFPHYLPADPRPFAYPSHTFGPDRKALGPGIYSNPGSYDPRAVAVKEEPRGPEGNRGTSRGSYNPLQYQVAHCGQTAVHLPPTLAAPGQPLRVLKAPVAAAAPPCSPLLKAPSPAGPSHKGKKAVNKDSLEYRLRRERNNIAVRKSRDKAKRRIMETQQKVLEYMAENERLRNRVDQLTQELDTLRNLFRQIPEAASLIKGVGGCS</sequence>
<gene>
    <name type="primary">Cebpe</name>
    <name type="synonym">Gm294</name>
</gene>
<accession>Q6PZD9</accession>
<accession>Q32MW9</accession>
<reference key="1">
    <citation type="submission" date="2004-03" db="EMBL/GenBank/DDBJ databases">
        <title>Characterization of the macrophage differentiation induced by mutated G-CSF receptors.</title>
        <authorList>
            <person name="Zhuang D."/>
            <person name="Zhang P."/>
            <person name="Dong F."/>
        </authorList>
    </citation>
    <scope>NUCLEOTIDE SEQUENCE [MRNA]</scope>
    <source>
        <strain>C57BL/6J</strain>
        <tissue>Spleen</tissue>
    </source>
</reference>
<reference key="2">
    <citation type="journal article" date="2004" name="Genome Res.">
        <title>The status, quality, and expansion of the NIH full-length cDNA project: the Mammalian Gene Collection (MGC).</title>
        <authorList>
            <consortium name="The MGC Project Team"/>
        </authorList>
    </citation>
    <scope>NUCLEOTIDE SEQUENCE [LARGE SCALE MRNA]</scope>
</reference>
<reference key="3">
    <citation type="journal article" date="2010" name="Cell">
        <title>A tissue-specific atlas of mouse protein phosphorylation and expression.</title>
        <authorList>
            <person name="Huttlin E.L."/>
            <person name="Jedrychowski M.P."/>
            <person name="Elias J.E."/>
            <person name="Goswami T."/>
            <person name="Rad R."/>
            <person name="Beausoleil S.A."/>
            <person name="Villen J."/>
            <person name="Haas W."/>
            <person name="Sowa M.E."/>
            <person name="Gygi S.P."/>
        </authorList>
    </citation>
    <scope>PHOSPHORYLATION [LARGE SCALE ANALYSIS] AT SER-181</scope>
    <scope>IDENTIFICATION BY MASS SPECTROMETRY [LARGE SCALE ANALYSIS]</scope>
    <source>
        <tissue>Spleen</tissue>
    </source>
</reference>
<keyword id="KW-0010">Activator</keyword>
<keyword id="KW-0238">DNA-binding</keyword>
<keyword id="KW-1017">Isopeptide bond</keyword>
<keyword id="KW-0539">Nucleus</keyword>
<keyword id="KW-0597">Phosphoprotein</keyword>
<keyword id="KW-1185">Reference proteome</keyword>
<keyword id="KW-0804">Transcription</keyword>
<keyword id="KW-0805">Transcription regulation</keyword>
<keyword id="KW-0832">Ubl conjugation</keyword>
<feature type="chain" id="PRO_0000076625" description="CCAAT/enhancer-binding protein epsilon">
    <location>
        <begin position="1"/>
        <end position="281"/>
    </location>
</feature>
<feature type="domain" description="bZIP" evidence="4">
    <location>
        <begin position="204"/>
        <end position="267"/>
    </location>
</feature>
<feature type="region of interest" description="Disordered" evidence="5">
    <location>
        <begin position="1"/>
        <end position="30"/>
    </location>
</feature>
<feature type="region of interest" description="Basic motif" evidence="4">
    <location>
        <begin position="208"/>
        <end position="245"/>
    </location>
</feature>
<feature type="region of interest" description="Leucine-zipper" evidence="4">
    <location>
        <begin position="246"/>
        <end position="267"/>
    </location>
</feature>
<feature type="modified residue" description="Phosphoserine" evidence="7">
    <location>
        <position position="181"/>
    </location>
</feature>
<feature type="cross-link" description="Glycyl lysine isopeptide (Lys-Gly) (interchain with G-Cter in SUMO2)" evidence="3">
    <location>
        <position position="121"/>
    </location>
</feature>
<dbReference type="EMBL" id="AY570294">
    <property type="protein sequence ID" value="AAS78198.1"/>
    <property type="molecule type" value="mRNA"/>
</dbReference>
<dbReference type="EMBL" id="BC108953">
    <property type="protein sequence ID" value="AAI08954.1"/>
    <property type="molecule type" value="mRNA"/>
</dbReference>
<dbReference type="CCDS" id="CCDS27100.1"/>
<dbReference type="RefSeq" id="NP_997014.1">
    <property type="nucleotide sequence ID" value="NM_207131.2"/>
</dbReference>
<dbReference type="SMR" id="Q6PZD9"/>
<dbReference type="BioGRID" id="225912">
    <property type="interactions" value="1"/>
</dbReference>
<dbReference type="FunCoup" id="Q6PZD9">
    <property type="interactions" value="305"/>
</dbReference>
<dbReference type="STRING" id="10090.ENSMUSP00000068927"/>
<dbReference type="iPTMnet" id="Q6PZD9"/>
<dbReference type="PhosphoSitePlus" id="Q6PZD9"/>
<dbReference type="PaxDb" id="10090-ENSMUSP00000068927"/>
<dbReference type="ProteomicsDB" id="281526"/>
<dbReference type="Antibodypedia" id="150">
    <property type="antibodies" value="382 antibodies from 31 providers"/>
</dbReference>
<dbReference type="DNASU" id="110794"/>
<dbReference type="Ensembl" id="ENSMUST00000064290.8">
    <property type="protein sequence ID" value="ENSMUSP00000068927.7"/>
    <property type="gene ID" value="ENSMUSG00000052435.8"/>
</dbReference>
<dbReference type="GeneID" id="110794"/>
<dbReference type="KEGG" id="mmu:110794"/>
<dbReference type="UCSC" id="uc007twz.1">
    <property type="organism name" value="mouse"/>
</dbReference>
<dbReference type="AGR" id="MGI:103572"/>
<dbReference type="CTD" id="1053"/>
<dbReference type="MGI" id="MGI:103572">
    <property type="gene designation" value="Cebpe"/>
</dbReference>
<dbReference type="VEuPathDB" id="HostDB:ENSMUSG00000052435"/>
<dbReference type="eggNOG" id="KOG3119">
    <property type="taxonomic scope" value="Eukaryota"/>
</dbReference>
<dbReference type="GeneTree" id="ENSGT00940000161681"/>
<dbReference type="HOGENOM" id="CLU_043327_0_0_1"/>
<dbReference type="InParanoid" id="Q6PZD9"/>
<dbReference type="OMA" id="CDHEASI"/>
<dbReference type="OrthoDB" id="10032067at2759"/>
<dbReference type="PhylomeDB" id="Q6PZD9"/>
<dbReference type="TreeFam" id="TF105008"/>
<dbReference type="BioGRID-ORCS" id="110794">
    <property type="hits" value="0 hits in 78 CRISPR screens"/>
</dbReference>
<dbReference type="PRO" id="PR:Q6PZD9"/>
<dbReference type="Proteomes" id="UP000000589">
    <property type="component" value="Chromosome 14"/>
</dbReference>
<dbReference type="RNAct" id="Q6PZD9">
    <property type="molecule type" value="protein"/>
</dbReference>
<dbReference type="Bgee" id="ENSMUSG00000052435">
    <property type="expression patterns" value="Expressed in granulocyte and 13 other cell types or tissues"/>
</dbReference>
<dbReference type="GO" id="GO:0005654">
    <property type="term" value="C:nucleoplasm"/>
    <property type="evidence" value="ECO:0000304"/>
    <property type="project" value="Reactome"/>
</dbReference>
<dbReference type="GO" id="GO:0005634">
    <property type="term" value="C:nucleus"/>
    <property type="evidence" value="ECO:0000266"/>
    <property type="project" value="MGI"/>
</dbReference>
<dbReference type="GO" id="GO:0005886">
    <property type="term" value="C:plasma membrane"/>
    <property type="evidence" value="ECO:0007669"/>
    <property type="project" value="Ensembl"/>
</dbReference>
<dbReference type="GO" id="GO:0090575">
    <property type="term" value="C:RNA polymerase II transcription regulator complex"/>
    <property type="evidence" value="ECO:0007669"/>
    <property type="project" value="Ensembl"/>
</dbReference>
<dbReference type="GO" id="GO:0003677">
    <property type="term" value="F:DNA binding"/>
    <property type="evidence" value="ECO:0000266"/>
    <property type="project" value="MGI"/>
</dbReference>
<dbReference type="GO" id="GO:0001228">
    <property type="term" value="F:DNA-binding transcription activator activity, RNA polymerase II-specific"/>
    <property type="evidence" value="ECO:0007669"/>
    <property type="project" value="Ensembl"/>
</dbReference>
<dbReference type="GO" id="GO:0042802">
    <property type="term" value="F:identical protein binding"/>
    <property type="evidence" value="ECO:0007669"/>
    <property type="project" value="Ensembl"/>
</dbReference>
<dbReference type="GO" id="GO:0044877">
    <property type="term" value="F:protein-containing complex binding"/>
    <property type="evidence" value="ECO:0007669"/>
    <property type="project" value="Ensembl"/>
</dbReference>
<dbReference type="GO" id="GO:0000978">
    <property type="term" value="F:RNA polymerase II cis-regulatory region sequence-specific DNA binding"/>
    <property type="evidence" value="ECO:0007669"/>
    <property type="project" value="Ensembl"/>
</dbReference>
<dbReference type="GO" id="GO:0071222">
    <property type="term" value="P:cellular response to lipopolysaccharide"/>
    <property type="evidence" value="ECO:0007669"/>
    <property type="project" value="Ensembl"/>
</dbReference>
<dbReference type="GO" id="GO:0006351">
    <property type="term" value="P:DNA-templated transcription"/>
    <property type="evidence" value="ECO:0007669"/>
    <property type="project" value="InterPro"/>
</dbReference>
<dbReference type="GO" id="GO:0030851">
    <property type="term" value="P:granulocyte differentiation"/>
    <property type="evidence" value="ECO:0007669"/>
    <property type="project" value="Ensembl"/>
</dbReference>
<dbReference type="GO" id="GO:0030225">
    <property type="term" value="P:macrophage differentiation"/>
    <property type="evidence" value="ECO:0000315"/>
    <property type="project" value="MGI"/>
</dbReference>
<dbReference type="GO" id="GO:0006909">
    <property type="term" value="P:phagocytosis"/>
    <property type="evidence" value="ECO:0000315"/>
    <property type="project" value="MGI"/>
</dbReference>
<dbReference type="GO" id="GO:0010628">
    <property type="term" value="P:positive regulation of gene expression"/>
    <property type="evidence" value="ECO:0000314"/>
    <property type="project" value="MGI"/>
</dbReference>
<dbReference type="CDD" id="cd14715">
    <property type="entry name" value="bZIP_CEBPE"/>
    <property type="match status" value="1"/>
</dbReference>
<dbReference type="FunFam" id="1.20.5.170:FF:000028">
    <property type="entry name" value="CCAAT/enhancer-binding protein beta"/>
    <property type="match status" value="1"/>
</dbReference>
<dbReference type="Gene3D" id="1.20.5.170">
    <property type="match status" value="1"/>
</dbReference>
<dbReference type="InterPro" id="IPR004827">
    <property type="entry name" value="bZIP"/>
</dbReference>
<dbReference type="InterPro" id="IPR046347">
    <property type="entry name" value="bZIP_sf"/>
</dbReference>
<dbReference type="InterPro" id="IPR031106">
    <property type="entry name" value="C/EBP"/>
</dbReference>
<dbReference type="InterPro" id="IPR016468">
    <property type="entry name" value="C/EBP_chordates"/>
</dbReference>
<dbReference type="PANTHER" id="PTHR23334">
    <property type="entry name" value="CCAAT/ENHANCER BINDING PROTEIN"/>
    <property type="match status" value="1"/>
</dbReference>
<dbReference type="PANTHER" id="PTHR23334:SF27">
    <property type="entry name" value="CCAAT_ENHANCER-BINDING PROTEIN EPSILON"/>
    <property type="match status" value="1"/>
</dbReference>
<dbReference type="Pfam" id="PF07716">
    <property type="entry name" value="bZIP_2"/>
    <property type="match status" value="1"/>
</dbReference>
<dbReference type="PIRSF" id="PIRSF005879">
    <property type="entry name" value="CCAAT/enhancer-binding"/>
    <property type="match status" value="1"/>
</dbReference>
<dbReference type="SMART" id="SM00338">
    <property type="entry name" value="BRLZ"/>
    <property type="match status" value="1"/>
</dbReference>
<dbReference type="SUPFAM" id="SSF57959">
    <property type="entry name" value="Leucine zipper domain"/>
    <property type="match status" value="1"/>
</dbReference>
<dbReference type="PROSITE" id="PS50217">
    <property type="entry name" value="BZIP"/>
    <property type="match status" value="1"/>
</dbReference>